<comment type="function">
    <text evidence="1">Probable glycylase which modifies tubulin, generating side chains of glycine on the gamma-carboxyl groups of specific glutamate residues within the C-terminal tail of tubulin.</text>
</comment>
<comment type="subcellular location">
    <subcellularLocation>
        <location evidence="6">Cell projection</location>
        <location evidence="6">Cilium</location>
    </subcellularLocation>
    <subcellularLocation>
        <location evidence="6">Cytoplasm</location>
        <location evidence="6">Cytoskeleton</location>
        <location evidence="6">Cilium axoneme</location>
    </subcellularLocation>
    <text>Mainly present in locomotory and oral cilia.</text>
</comment>
<comment type="disruption phenotype">
    <text evidence="6">Cells lacking TTLL3A, TTLL3B, TTLL3C, TTLL3D, TTLL3E and TTLL3F display shortened axonemes that are resistant to paclitaxel, indicating that tubulin glycylation changes the lattice properties of axonemal microtubules. Axonemes are however normal at the ultrastructural level.</text>
</comment>
<reference key="1">
    <citation type="journal article" date="2006" name="PLoS Biol.">
        <title>Macronuclear genome sequence of the ciliate Tetrahymena thermophila, a model eukaryote.</title>
        <authorList>
            <person name="Eisen J.A."/>
            <person name="Coyne R.S."/>
            <person name="Wu M."/>
            <person name="Wu D."/>
            <person name="Thiagarajan M."/>
            <person name="Wortman J.R."/>
            <person name="Badger J.H."/>
            <person name="Ren Q."/>
            <person name="Amedeo P."/>
            <person name="Jones K.M."/>
            <person name="Tallon L.J."/>
            <person name="Delcher A.L."/>
            <person name="Salzberg S.L."/>
            <person name="Silva J.C."/>
            <person name="Haas B.J."/>
            <person name="Majoros W.H."/>
            <person name="Farzad M."/>
            <person name="Carlton J.M."/>
            <person name="Smith R.K. Jr."/>
            <person name="Garg J."/>
            <person name="Pearlman R.E."/>
            <person name="Karrer K.M."/>
            <person name="Sun L."/>
            <person name="Manning G."/>
            <person name="Elde N.C."/>
            <person name="Turkewitz A.P."/>
            <person name="Asai D.J."/>
            <person name="Wilkes D.E."/>
            <person name="Wang Y."/>
            <person name="Cai H."/>
            <person name="Collins K."/>
            <person name="Stewart B.A."/>
            <person name="Lee S.R."/>
            <person name="Wilamowska K."/>
            <person name="Weinberg Z."/>
            <person name="Ruzzo W.L."/>
            <person name="Wloga D."/>
            <person name="Gaertig J."/>
            <person name="Frankel J."/>
            <person name="Tsao C.-C."/>
            <person name="Gorovsky M.A."/>
            <person name="Keeling P.J."/>
            <person name="Waller R.F."/>
            <person name="Patron N.J."/>
            <person name="Cherry J.M."/>
            <person name="Stover N.A."/>
            <person name="Krieger C.J."/>
            <person name="del Toro C."/>
            <person name="Ryder H.F."/>
            <person name="Williamson S.C."/>
            <person name="Barbeau R.A."/>
            <person name="Hamilton E.P."/>
            <person name="Orias E."/>
        </authorList>
    </citation>
    <scope>NUCLEOTIDE SEQUENCE [LARGE SCALE GENOMIC DNA]</scope>
    <source>
        <strain>SB210</strain>
    </source>
</reference>
<reference key="2">
    <citation type="journal article" date="2009" name="Dev. Cell">
        <title>TTLL3 Is a tubulin glycine ligase that regulates the assembly of cilia.</title>
        <authorList>
            <person name="Wloga D."/>
            <person name="Webster D.M."/>
            <person name="Rogowski K."/>
            <person name="Bre M.-H."/>
            <person name="Levilliers N."/>
            <person name="Jerka-Dziadosz M."/>
            <person name="Janke C."/>
            <person name="Dougan S.T."/>
            <person name="Gaertig J."/>
        </authorList>
    </citation>
    <scope>SUBCELLULAR LOCATION</scope>
    <scope>DISRUPTION PHENOTYPE</scope>
</reference>
<gene>
    <name type="primary">TTLL3E</name>
    <name type="ORF">TTHERM_00770730</name>
</gene>
<organism>
    <name type="scientific">Tetrahymena thermophila (strain SB210)</name>
    <dbReference type="NCBI Taxonomy" id="312017"/>
    <lineage>
        <taxon>Eukaryota</taxon>
        <taxon>Sar</taxon>
        <taxon>Alveolata</taxon>
        <taxon>Ciliophora</taxon>
        <taxon>Intramacronucleata</taxon>
        <taxon>Oligohymenophorea</taxon>
        <taxon>Hymenostomatida</taxon>
        <taxon>Tetrahymenina</taxon>
        <taxon>Tetrahymenidae</taxon>
        <taxon>Tetrahymena</taxon>
    </lineage>
</organism>
<protein>
    <recommendedName>
        <fullName>Tubulin glycylase 3E</fullName>
        <ecNumber>6.3.2.-</ecNumber>
    </recommendedName>
</protein>
<name>TTL3E_TETTS</name>
<dbReference type="EC" id="6.3.2.-"/>
<dbReference type="EMBL" id="GG662723">
    <property type="protein sequence ID" value="EAR93620.1"/>
    <property type="molecule type" value="Genomic_DNA"/>
</dbReference>
<dbReference type="RefSeq" id="XP_001013865.1">
    <property type="nucleotide sequence ID" value="XM_001013865.1"/>
</dbReference>
<dbReference type="SMR" id="Q23AS2"/>
<dbReference type="STRING" id="312017.Q23AS2"/>
<dbReference type="EnsemblProtists" id="EAR93620">
    <property type="protein sequence ID" value="EAR93620"/>
    <property type="gene ID" value="TTHERM_00770730"/>
</dbReference>
<dbReference type="GeneID" id="7823109"/>
<dbReference type="KEGG" id="tet:TTHERM_00770730"/>
<dbReference type="eggNOG" id="KOG2157">
    <property type="taxonomic scope" value="Eukaryota"/>
</dbReference>
<dbReference type="HOGENOM" id="CLU_254769_0_0_1"/>
<dbReference type="InParanoid" id="Q23AS2"/>
<dbReference type="OMA" id="HNTWICK"/>
<dbReference type="OrthoDB" id="202825at2759"/>
<dbReference type="Proteomes" id="UP000009168">
    <property type="component" value="Unassembled WGS sequence"/>
</dbReference>
<dbReference type="GO" id="GO:0005929">
    <property type="term" value="C:cilium"/>
    <property type="evidence" value="ECO:0000314"/>
    <property type="project" value="UniProtKB"/>
</dbReference>
<dbReference type="GO" id="GO:0005737">
    <property type="term" value="C:cytoplasm"/>
    <property type="evidence" value="ECO:0007669"/>
    <property type="project" value="UniProtKB-KW"/>
</dbReference>
<dbReference type="GO" id="GO:0015630">
    <property type="term" value="C:microtubule cytoskeleton"/>
    <property type="evidence" value="ECO:0007669"/>
    <property type="project" value="TreeGrafter"/>
</dbReference>
<dbReference type="GO" id="GO:0005524">
    <property type="term" value="F:ATP binding"/>
    <property type="evidence" value="ECO:0007669"/>
    <property type="project" value="UniProtKB-KW"/>
</dbReference>
<dbReference type="GO" id="GO:0070735">
    <property type="term" value="F:protein-glycine ligase activity"/>
    <property type="evidence" value="ECO:0000304"/>
    <property type="project" value="UniProtKB"/>
</dbReference>
<dbReference type="GO" id="GO:0070736">
    <property type="term" value="F:protein-glycine ligase activity, initiating"/>
    <property type="evidence" value="ECO:0007669"/>
    <property type="project" value="TreeGrafter"/>
</dbReference>
<dbReference type="GO" id="GO:0018094">
    <property type="term" value="P:protein polyglycylation"/>
    <property type="evidence" value="ECO:0000304"/>
    <property type="project" value="UniProtKB"/>
</dbReference>
<dbReference type="FunFam" id="3.30.470.20:FF:000168">
    <property type="entry name" value="Tubulin glycylase 3E"/>
    <property type="match status" value="1"/>
</dbReference>
<dbReference type="Gene3D" id="1.20.5.190">
    <property type="match status" value="1"/>
</dbReference>
<dbReference type="Gene3D" id="3.30.470.20">
    <property type="entry name" value="ATP-grasp fold, B domain"/>
    <property type="match status" value="1"/>
</dbReference>
<dbReference type="InterPro" id="IPR004344">
    <property type="entry name" value="TTL/TTLL_fam"/>
</dbReference>
<dbReference type="InterPro" id="IPR051437">
    <property type="entry name" value="TTLL_monoglycylase"/>
</dbReference>
<dbReference type="PANTHER" id="PTHR45870">
    <property type="entry name" value="TUBULIN MONOGLYCYLASE TTLL3"/>
    <property type="match status" value="1"/>
</dbReference>
<dbReference type="PANTHER" id="PTHR45870:SF2">
    <property type="entry name" value="TUBULIN MONOGLYCYLASE TTLL3"/>
    <property type="match status" value="1"/>
</dbReference>
<dbReference type="Pfam" id="PF03133">
    <property type="entry name" value="TTL"/>
    <property type="match status" value="1"/>
</dbReference>
<dbReference type="SUPFAM" id="SSF56059">
    <property type="entry name" value="Glutathione synthetase ATP-binding domain-like"/>
    <property type="match status" value="1"/>
</dbReference>
<dbReference type="PROSITE" id="PS50096">
    <property type="entry name" value="IQ"/>
    <property type="match status" value="2"/>
</dbReference>
<dbReference type="PROSITE" id="PS51221">
    <property type="entry name" value="TTL"/>
    <property type="match status" value="1"/>
</dbReference>
<keyword id="KW-0067">ATP-binding</keyword>
<keyword id="KW-0966">Cell projection</keyword>
<keyword id="KW-0969">Cilium</keyword>
<keyword id="KW-0963">Cytoplasm</keyword>
<keyword id="KW-0206">Cytoskeleton</keyword>
<keyword id="KW-0436">Ligase</keyword>
<keyword id="KW-0547">Nucleotide-binding</keyword>
<keyword id="KW-1185">Reference proteome</keyword>
<keyword id="KW-0677">Repeat</keyword>
<accession>Q23AS2</accession>
<proteinExistence type="inferred from homology"/>
<evidence type="ECO:0000250" key="1"/>
<evidence type="ECO:0000250" key="2">
    <source>
        <dbReference type="UniProtKB" id="Q6ZT98"/>
    </source>
</evidence>
<evidence type="ECO:0000255" key="3">
    <source>
        <dbReference type="PROSITE-ProRule" id="PRU00116"/>
    </source>
</evidence>
<evidence type="ECO:0000255" key="4">
    <source>
        <dbReference type="PROSITE-ProRule" id="PRU00568"/>
    </source>
</evidence>
<evidence type="ECO:0000256" key="5">
    <source>
        <dbReference type="SAM" id="MobiDB-lite"/>
    </source>
</evidence>
<evidence type="ECO:0000269" key="6">
    <source>
    </source>
</evidence>
<feature type="chain" id="PRO_0000381801" description="Tubulin glycylase 3E">
    <location>
        <begin position="1"/>
        <end position="1394"/>
    </location>
</feature>
<feature type="domain" description="TTL" evidence="4">
    <location>
        <begin position="911"/>
        <end position="1250"/>
    </location>
</feature>
<feature type="domain" description="IQ 1" evidence="3">
    <location>
        <begin position="1320"/>
        <end position="1349"/>
    </location>
</feature>
<feature type="domain" description="IQ 2" evidence="3">
    <location>
        <begin position="1348"/>
        <end position="1377"/>
    </location>
</feature>
<feature type="region of interest" description="Disordered" evidence="5">
    <location>
        <begin position="201"/>
        <end position="230"/>
    </location>
</feature>
<feature type="region of interest" description="Disordered" evidence="5">
    <location>
        <begin position="563"/>
        <end position="582"/>
    </location>
</feature>
<feature type="region of interest" description="Disordered" evidence="5">
    <location>
        <begin position="620"/>
        <end position="663"/>
    </location>
</feature>
<feature type="region of interest" description="Disordered" evidence="5">
    <location>
        <begin position="682"/>
        <end position="706"/>
    </location>
</feature>
<feature type="compositionally biased region" description="Low complexity" evidence="5">
    <location>
        <begin position="205"/>
        <end position="216"/>
    </location>
</feature>
<feature type="compositionally biased region" description="Basic and acidic residues" evidence="5">
    <location>
        <begin position="217"/>
        <end position="230"/>
    </location>
</feature>
<feature type="compositionally biased region" description="Low complexity" evidence="5">
    <location>
        <begin position="568"/>
        <end position="582"/>
    </location>
</feature>
<feature type="compositionally biased region" description="Polar residues" evidence="5">
    <location>
        <begin position="627"/>
        <end position="655"/>
    </location>
</feature>
<feature type="compositionally biased region" description="Low complexity" evidence="5">
    <location>
        <begin position="682"/>
        <end position="703"/>
    </location>
</feature>
<feature type="binding site" evidence="2">
    <location>
        <begin position="1058"/>
        <end position="1061"/>
    </location>
    <ligand>
        <name>ATP</name>
        <dbReference type="ChEBI" id="CHEBI:30616"/>
    </ligand>
</feature>
<feature type="binding site" evidence="2">
    <location>
        <position position="1079"/>
    </location>
    <ligand>
        <name>ATP</name>
        <dbReference type="ChEBI" id="CHEBI:30616"/>
    </ligand>
</feature>
<feature type="binding site" evidence="2">
    <location>
        <position position="1081"/>
    </location>
    <ligand>
        <name>ATP</name>
        <dbReference type="ChEBI" id="CHEBI:30616"/>
    </ligand>
</feature>
<sequence length="1394" mass="164098">MILPFEYYFLNDADNSSKSNYNNIQFINENQNNNLRQKPKFYPNNQFLIEQEQDKYENKKIKNYISDQIQLQPKNTPINKMNHFANINNYQDNKFSLESLNQAQQDNLQKEEDLSILSFDSQEELNYLQEGEENNQFLNEGDIFGYQTRYTFFENRNNLLVEDATNKNNNNYNYNYNNNNSSTQRNYDFNYQNTNEMLQKKKKSNFQNKSQSQLNNHKNEEKKPSQQRKEQLMKRFESLSRIYNKELSQTVTNGWLKPSQAKTISQDNNLGSSAAKSSKVFYQQQKPFSAQITNSSLKYAAASNGFQNLDFSYKQKQQLIQQETKNKIKEQQNVESNNRISMKPPKSANLNSYKNISNLKNFKEIILTRPNSKQVKFQQQNSVNSQPSSLVSQPLKIQSIEKNNLNSNLNDQNFYDDFAELGSTETTGFSFQNVFQLAGVPKDFIASPRSPVQELNQKQENRENELDQMLNDHHIYVASSVTNQNQIKNEQTERKPNMFGKTLTTLARPFSKEYSNRKDILKSAQQNVRFNKNLDYLDSQNKVVAKNKKRTIFKINQNNLQGNQKDLQSNQTSSVISQQNSIQQYGDDNYQQNQVLNDDQSPLIKQNSIDLNAAEIIQNDENENTQKENVLQQKKNQSNQIVTSQQQSNNYFKQETTTNTSNFSTTSNRIISLQALRQKNNSTVKNSDNNNQNQTNPQNQNTNLKENNDKQNLKKTKIQSASANQAGQSNNQLQKTFFINSQDEYVRRTLLRMGWKENKLLLNNNFDLKWIYIDSNDDYKFLNDNQFYNHFKNNTELTQKGRLLYNLKNNTQFGVNQELFFPRCYDLGNDQERGEFSNEFNRMNVMNLLKKHIQYIKLRRSQTYQEIKQAYQQKQANKLNAQVKDGIFFAKVTKQKFFSPLMYEDTKRDNRFIFNITVIAEAVEILKKLKRQQEEYIDETRQSRDCQLYIYQTNFKLESMISQYVKINVPFDEEKFVFEKIVGMSKEHWSSPSMKLMKKLYSLYKYFKDADPQFKVSGTKNIWIIKPSANSRGSGIYLVDKLDEAIDSGLKMQARIVQKYIERPLIFQGAKYKKLNNKKFDIRQWVLVTSFKPLKIYFFTSSYLRVCSQSFDLDNIKILSKHLTNFSLNKNSLAKENWDETVVELKDFISYLKEFKNIDYQEDVKPKIKDLVIETIKCAADKIVNRKKSFELYGFDILLDEYAHPWLLEVNLSPACSERSSFLTEMLDAMAYKMFQIVFKQNNLQEDLEINKETAISTAPASCQNPDYDWEEIYNEEQKEYFCEEDNNMQLAFNNDIQLMVIGQKADLKKEKNLDKKYFQYWGAIKIQSKIRSFLAKKKLQRLKNQKFTFAAIKIQQKMRQFLAKKQLNILKKQQQTNINIPIEDFNQVSVIEV</sequence>